<evidence type="ECO:0000255" key="1">
    <source>
        <dbReference type="HAMAP-Rule" id="MF_00195"/>
    </source>
</evidence>
<dbReference type="EMBL" id="CP001020">
    <property type="protein sequence ID" value="ACJ20302.1"/>
    <property type="molecule type" value="Genomic_DNA"/>
</dbReference>
<dbReference type="RefSeq" id="WP_005770802.1">
    <property type="nucleotide sequence ID" value="NC_011528.1"/>
</dbReference>
<dbReference type="SMR" id="B6J7Q3"/>
<dbReference type="KEGG" id="cbc:CbuK_1106"/>
<dbReference type="HOGENOM" id="CLU_016077_6_2_6"/>
<dbReference type="GO" id="GO:0005525">
    <property type="term" value="F:GTP binding"/>
    <property type="evidence" value="ECO:0007669"/>
    <property type="project" value="UniProtKB-UniRule"/>
</dbReference>
<dbReference type="GO" id="GO:0043022">
    <property type="term" value="F:ribosome binding"/>
    <property type="evidence" value="ECO:0007669"/>
    <property type="project" value="TreeGrafter"/>
</dbReference>
<dbReference type="GO" id="GO:0042254">
    <property type="term" value="P:ribosome biogenesis"/>
    <property type="evidence" value="ECO:0007669"/>
    <property type="project" value="UniProtKB-KW"/>
</dbReference>
<dbReference type="CDD" id="cd01894">
    <property type="entry name" value="EngA1"/>
    <property type="match status" value="1"/>
</dbReference>
<dbReference type="CDD" id="cd01895">
    <property type="entry name" value="EngA2"/>
    <property type="match status" value="1"/>
</dbReference>
<dbReference type="FunFam" id="3.30.300.20:FF:000004">
    <property type="entry name" value="GTPase Der"/>
    <property type="match status" value="1"/>
</dbReference>
<dbReference type="FunFam" id="3.40.50.300:FF:000040">
    <property type="entry name" value="GTPase Der"/>
    <property type="match status" value="1"/>
</dbReference>
<dbReference type="FunFam" id="3.40.50.300:FF:000057">
    <property type="entry name" value="GTPase Der"/>
    <property type="match status" value="1"/>
</dbReference>
<dbReference type="Gene3D" id="3.30.300.20">
    <property type="match status" value="1"/>
</dbReference>
<dbReference type="Gene3D" id="3.40.50.300">
    <property type="entry name" value="P-loop containing nucleotide triphosphate hydrolases"/>
    <property type="match status" value="2"/>
</dbReference>
<dbReference type="HAMAP" id="MF_00195">
    <property type="entry name" value="GTPase_Der"/>
    <property type="match status" value="1"/>
</dbReference>
<dbReference type="InterPro" id="IPR031166">
    <property type="entry name" value="G_ENGA"/>
</dbReference>
<dbReference type="InterPro" id="IPR006073">
    <property type="entry name" value="GTP-bd"/>
</dbReference>
<dbReference type="InterPro" id="IPR016484">
    <property type="entry name" value="GTPase_Der"/>
</dbReference>
<dbReference type="InterPro" id="IPR032859">
    <property type="entry name" value="KH_dom-like"/>
</dbReference>
<dbReference type="InterPro" id="IPR015946">
    <property type="entry name" value="KH_dom-like_a/b"/>
</dbReference>
<dbReference type="InterPro" id="IPR027417">
    <property type="entry name" value="P-loop_NTPase"/>
</dbReference>
<dbReference type="InterPro" id="IPR005225">
    <property type="entry name" value="Small_GTP-bd"/>
</dbReference>
<dbReference type="NCBIfam" id="TIGR03594">
    <property type="entry name" value="GTPase_EngA"/>
    <property type="match status" value="1"/>
</dbReference>
<dbReference type="NCBIfam" id="TIGR00231">
    <property type="entry name" value="small_GTP"/>
    <property type="match status" value="2"/>
</dbReference>
<dbReference type="PANTHER" id="PTHR43834">
    <property type="entry name" value="GTPASE DER"/>
    <property type="match status" value="1"/>
</dbReference>
<dbReference type="PANTHER" id="PTHR43834:SF6">
    <property type="entry name" value="GTPASE DER"/>
    <property type="match status" value="1"/>
</dbReference>
<dbReference type="Pfam" id="PF14714">
    <property type="entry name" value="KH_dom-like"/>
    <property type="match status" value="1"/>
</dbReference>
<dbReference type="Pfam" id="PF01926">
    <property type="entry name" value="MMR_HSR1"/>
    <property type="match status" value="2"/>
</dbReference>
<dbReference type="PIRSF" id="PIRSF006485">
    <property type="entry name" value="GTP-binding_EngA"/>
    <property type="match status" value="1"/>
</dbReference>
<dbReference type="PRINTS" id="PR00326">
    <property type="entry name" value="GTP1OBG"/>
</dbReference>
<dbReference type="SUPFAM" id="SSF52540">
    <property type="entry name" value="P-loop containing nucleoside triphosphate hydrolases"/>
    <property type="match status" value="2"/>
</dbReference>
<dbReference type="PROSITE" id="PS51712">
    <property type="entry name" value="G_ENGA"/>
    <property type="match status" value="2"/>
</dbReference>
<feature type="chain" id="PRO_1000099111" description="GTPase Der">
    <location>
        <begin position="1"/>
        <end position="443"/>
    </location>
</feature>
<feature type="domain" description="EngA-type G 1">
    <location>
        <begin position="3"/>
        <end position="167"/>
    </location>
</feature>
<feature type="domain" description="EngA-type G 2">
    <location>
        <begin position="176"/>
        <end position="349"/>
    </location>
</feature>
<feature type="domain" description="KH-like" evidence="1">
    <location>
        <begin position="350"/>
        <end position="434"/>
    </location>
</feature>
<feature type="binding site" evidence="1">
    <location>
        <begin position="9"/>
        <end position="16"/>
    </location>
    <ligand>
        <name>GTP</name>
        <dbReference type="ChEBI" id="CHEBI:37565"/>
        <label>1</label>
    </ligand>
</feature>
<feature type="binding site" evidence="1">
    <location>
        <begin position="56"/>
        <end position="60"/>
    </location>
    <ligand>
        <name>GTP</name>
        <dbReference type="ChEBI" id="CHEBI:37565"/>
        <label>1</label>
    </ligand>
</feature>
<feature type="binding site" evidence="1">
    <location>
        <begin position="119"/>
        <end position="122"/>
    </location>
    <ligand>
        <name>GTP</name>
        <dbReference type="ChEBI" id="CHEBI:37565"/>
        <label>1</label>
    </ligand>
</feature>
<feature type="binding site" evidence="1">
    <location>
        <begin position="182"/>
        <end position="189"/>
    </location>
    <ligand>
        <name>GTP</name>
        <dbReference type="ChEBI" id="CHEBI:37565"/>
        <label>2</label>
    </ligand>
</feature>
<feature type="binding site" evidence="1">
    <location>
        <begin position="229"/>
        <end position="233"/>
    </location>
    <ligand>
        <name>GTP</name>
        <dbReference type="ChEBI" id="CHEBI:37565"/>
        <label>2</label>
    </ligand>
</feature>
<feature type="binding site" evidence="1">
    <location>
        <begin position="294"/>
        <end position="297"/>
    </location>
    <ligand>
        <name>GTP</name>
        <dbReference type="ChEBI" id="CHEBI:37565"/>
        <label>2</label>
    </ligand>
</feature>
<reference key="1">
    <citation type="journal article" date="2009" name="Infect. Immun.">
        <title>Comparative genomics reveal extensive transposon-mediated genomic plasticity and diversity among potential effector proteins within the genus Coxiella.</title>
        <authorList>
            <person name="Beare P.A."/>
            <person name="Unsworth N."/>
            <person name="Andoh M."/>
            <person name="Voth D.E."/>
            <person name="Omsland A."/>
            <person name="Gilk S.D."/>
            <person name="Williams K.P."/>
            <person name="Sobral B.W."/>
            <person name="Kupko J.J. III"/>
            <person name="Porcella S.F."/>
            <person name="Samuel J.E."/>
            <person name="Heinzen R.A."/>
        </authorList>
    </citation>
    <scope>NUCLEOTIDE SEQUENCE [LARGE SCALE GENOMIC DNA]</scope>
    <source>
        <strain>CbuK_Q154</strain>
    </source>
</reference>
<gene>
    <name evidence="1" type="primary">der</name>
    <name type="synonym">engA</name>
    <name type="ordered locus">CbuK_1106</name>
</gene>
<keyword id="KW-0342">GTP-binding</keyword>
<keyword id="KW-0547">Nucleotide-binding</keyword>
<keyword id="KW-0677">Repeat</keyword>
<keyword id="KW-0690">Ribosome biogenesis</keyword>
<comment type="function">
    <text evidence="1">GTPase that plays an essential role in the late steps of ribosome biogenesis.</text>
</comment>
<comment type="subunit">
    <text evidence="1">Associates with the 50S ribosomal subunit.</text>
</comment>
<comment type="similarity">
    <text evidence="1">Belongs to the TRAFAC class TrmE-Era-EngA-EngB-Septin-like GTPase superfamily. EngA (Der) GTPase family.</text>
</comment>
<organism>
    <name type="scientific">Coxiella burnetii (strain CbuK_Q154)</name>
    <name type="common">Coxiella burnetii (strain Q154)</name>
    <dbReference type="NCBI Taxonomy" id="434924"/>
    <lineage>
        <taxon>Bacteria</taxon>
        <taxon>Pseudomonadati</taxon>
        <taxon>Pseudomonadota</taxon>
        <taxon>Gammaproteobacteria</taxon>
        <taxon>Legionellales</taxon>
        <taxon>Coxiellaceae</taxon>
        <taxon>Coxiella</taxon>
    </lineage>
</organism>
<accession>B6J7Q3</accession>
<name>DER_COXB1</name>
<proteinExistence type="inferred from homology"/>
<sequence length="443" mass="49707">MLPVIAIVGRPNVGKSTLFNYLTKSRAALVADVPGVTRDRQYGETTIDSQRLLLVDTGGLVDTENKEVAPLAETQVEQAIDESDCILFLVDAKAGLVPADEIIAERLRKKGKKIFLAVNKADRARAAVVQSDFYKLGFGEPYVIAAASGRGVKDLMTQVLENLPEEKEVIEKEVGIKIAMIGRPNVGKSTLINRLLGEERVIVYDQPGTTRDSIYIPFARNDENYTLIDTAGIRRRAKIQDYVEKFSMIKSLQAMHAADVVIFLLDARQGVTEQDLRLLNRIVEAGVSLIIAVNKWDGLNIEERDNVRNAIDRRMPFVDFARRYFISALHGTGVGKLFRAIQESYQSIQQELTTGQLTRALEKAVAEHEPPLVKGRRIRLRYAHLGARHPLTIVVHGKQTKSLPQSYSRYLANYFRKTFNFIGVPVHIKLKTDPNPYEGQEER</sequence>
<protein>
    <recommendedName>
        <fullName evidence="1">GTPase Der</fullName>
    </recommendedName>
    <alternativeName>
        <fullName evidence="1">GTP-binding protein EngA</fullName>
    </alternativeName>
</protein>